<keyword id="KW-1185">Reference proteome</keyword>
<keyword id="KW-0687">Ribonucleoprotein</keyword>
<keyword id="KW-0689">Ribosomal protein</keyword>
<keyword id="KW-0694">RNA-binding</keyword>
<keyword id="KW-0699">rRNA-binding</keyword>
<keyword id="KW-0820">tRNA-binding</keyword>
<reference key="1">
    <citation type="journal article" date="2004" name="Mol. Plant Microbe Interact.">
        <title>The genome sequence of the Gram-positive sugarcane pathogen Leifsonia xyli subsp. xyli.</title>
        <authorList>
            <person name="Monteiro-Vitorello C.B."/>
            <person name="Camargo L.E.A."/>
            <person name="Van Sluys M.A."/>
            <person name="Kitajima J.P."/>
            <person name="Truffi D."/>
            <person name="do Amaral A.M."/>
            <person name="Harakava R."/>
            <person name="de Oliveira J.C.F."/>
            <person name="Wood D."/>
            <person name="de Oliveira M.C."/>
            <person name="Miyaki C.Y."/>
            <person name="Takita M.A."/>
            <person name="da Silva A.C.R."/>
            <person name="Furlan L.R."/>
            <person name="Carraro D.M."/>
            <person name="Camarotte G."/>
            <person name="Almeida N.F. Jr."/>
            <person name="Carrer H."/>
            <person name="Coutinho L.L."/>
            <person name="El-Dorry H.A."/>
            <person name="Ferro M.I.T."/>
            <person name="Gagliardi P.R."/>
            <person name="Giglioti E."/>
            <person name="Goldman M.H.S."/>
            <person name="Goldman G.H."/>
            <person name="Kimura E.T."/>
            <person name="Ferro E.S."/>
            <person name="Kuramae E.E."/>
            <person name="Lemos E.G.M."/>
            <person name="Lemos M.V.F."/>
            <person name="Mauro S.M.Z."/>
            <person name="Machado M.A."/>
            <person name="Marino C.L."/>
            <person name="Menck C.F."/>
            <person name="Nunes L.R."/>
            <person name="Oliveira R.C."/>
            <person name="Pereira G.G."/>
            <person name="Siqueira W."/>
            <person name="de Souza A.A."/>
            <person name="Tsai S.M."/>
            <person name="Zanca A.S."/>
            <person name="Simpson A.J.G."/>
            <person name="Brumbley S.M."/>
            <person name="Setubal J.C."/>
        </authorList>
    </citation>
    <scope>NUCLEOTIDE SEQUENCE [LARGE SCALE GENOMIC DNA]</scope>
    <source>
        <strain>CTCB07</strain>
    </source>
</reference>
<organism>
    <name type="scientific">Leifsonia xyli subsp. xyli (strain CTCB07)</name>
    <dbReference type="NCBI Taxonomy" id="281090"/>
    <lineage>
        <taxon>Bacteria</taxon>
        <taxon>Bacillati</taxon>
        <taxon>Actinomycetota</taxon>
        <taxon>Actinomycetes</taxon>
        <taxon>Micrococcales</taxon>
        <taxon>Microbacteriaceae</taxon>
        <taxon>Leifsonia</taxon>
    </lineage>
</organism>
<dbReference type="EMBL" id="AE016822">
    <property type="protein sequence ID" value="AAT89742.1"/>
    <property type="molecule type" value="Genomic_DNA"/>
</dbReference>
<dbReference type="RefSeq" id="WP_011186728.1">
    <property type="nucleotide sequence ID" value="NC_006087.1"/>
</dbReference>
<dbReference type="SMR" id="Q6AD02"/>
<dbReference type="STRING" id="281090.Lxx20260"/>
<dbReference type="KEGG" id="lxx:Lxx20260"/>
<dbReference type="eggNOG" id="COG0197">
    <property type="taxonomic scope" value="Bacteria"/>
</dbReference>
<dbReference type="HOGENOM" id="CLU_078858_2_1_11"/>
<dbReference type="Proteomes" id="UP000001306">
    <property type="component" value="Chromosome"/>
</dbReference>
<dbReference type="GO" id="GO:0022625">
    <property type="term" value="C:cytosolic large ribosomal subunit"/>
    <property type="evidence" value="ECO:0007669"/>
    <property type="project" value="TreeGrafter"/>
</dbReference>
<dbReference type="GO" id="GO:0019843">
    <property type="term" value="F:rRNA binding"/>
    <property type="evidence" value="ECO:0007669"/>
    <property type="project" value="UniProtKB-UniRule"/>
</dbReference>
<dbReference type="GO" id="GO:0003735">
    <property type="term" value="F:structural constituent of ribosome"/>
    <property type="evidence" value="ECO:0007669"/>
    <property type="project" value="InterPro"/>
</dbReference>
<dbReference type="GO" id="GO:0000049">
    <property type="term" value="F:tRNA binding"/>
    <property type="evidence" value="ECO:0007669"/>
    <property type="project" value="UniProtKB-KW"/>
</dbReference>
<dbReference type="GO" id="GO:0006412">
    <property type="term" value="P:translation"/>
    <property type="evidence" value="ECO:0007669"/>
    <property type="project" value="UniProtKB-UniRule"/>
</dbReference>
<dbReference type="CDD" id="cd01433">
    <property type="entry name" value="Ribosomal_L16_L10e"/>
    <property type="match status" value="1"/>
</dbReference>
<dbReference type="FunFam" id="3.90.1170.10:FF:000001">
    <property type="entry name" value="50S ribosomal protein L16"/>
    <property type="match status" value="1"/>
</dbReference>
<dbReference type="Gene3D" id="3.90.1170.10">
    <property type="entry name" value="Ribosomal protein L10e/L16"/>
    <property type="match status" value="1"/>
</dbReference>
<dbReference type="HAMAP" id="MF_01342">
    <property type="entry name" value="Ribosomal_uL16"/>
    <property type="match status" value="1"/>
</dbReference>
<dbReference type="InterPro" id="IPR047873">
    <property type="entry name" value="Ribosomal_uL16"/>
</dbReference>
<dbReference type="InterPro" id="IPR000114">
    <property type="entry name" value="Ribosomal_uL16_bact-type"/>
</dbReference>
<dbReference type="InterPro" id="IPR020798">
    <property type="entry name" value="Ribosomal_uL16_CS"/>
</dbReference>
<dbReference type="InterPro" id="IPR016180">
    <property type="entry name" value="Ribosomal_uL16_dom"/>
</dbReference>
<dbReference type="InterPro" id="IPR036920">
    <property type="entry name" value="Ribosomal_uL16_sf"/>
</dbReference>
<dbReference type="NCBIfam" id="TIGR01164">
    <property type="entry name" value="rplP_bact"/>
    <property type="match status" value="1"/>
</dbReference>
<dbReference type="PANTHER" id="PTHR12220">
    <property type="entry name" value="50S/60S RIBOSOMAL PROTEIN L16"/>
    <property type="match status" value="1"/>
</dbReference>
<dbReference type="PANTHER" id="PTHR12220:SF13">
    <property type="entry name" value="LARGE RIBOSOMAL SUBUNIT PROTEIN UL16M"/>
    <property type="match status" value="1"/>
</dbReference>
<dbReference type="Pfam" id="PF00252">
    <property type="entry name" value="Ribosomal_L16"/>
    <property type="match status" value="1"/>
</dbReference>
<dbReference type="PRINTS" id="PR00060">
    <property type="entry name" value="RIBOSOMALL16"/>
</dbReference>
<dbReference type="SUPFAM" id="SSF54686">
    <property type="entry name" value="Ribosomal protein L16p/L10e"/>
    <property type="match status" value="1"/>
</dbReference>
<dbReference type="PROSITE" id="PS00586">
    <property type="entry name" value="RIBOSOMAL_L16_1"/>
    <property type="match status" value="1"/>
</dbReference>
<dbReference type="PROSITE" id="PS00701">
    <property type="entry name" value="RIBOSOMAL_L16_2"/>
    <property type="match status" value="1"/>
</dbReference>
<sequence>MLIPRRVKHRKQHHPGRSGQATGGTKVSFGEFGIQALTPAYVTNRQIESARIAMTRHIKRGGKVWINIYPDRPLTKKPAETRMGSGKGSPEWWVANVKPGRVLFEVSGVSEDLAREAMSRAIHKLPLKARIIKREEGDA</sequence>
<protein>
    <recommendedName>
        <fullName evidence="1">Large ribosomal subunit protein uL16</fullName>
    </recommendedName>
    <alternativeName>
        <fullName evidence="3">50S ribosomal protein L16</fullName>
    </alternativeName>
</protein>
<accession>Q6AD02</accession>
<feature type="chain" id="PRO_0000062126" description="Large ribosomal subunit protein uL16">
    <location>
        <begin position="1"/>
        <end position="139"/>
    </location>
</feature>
<feature type="region of interest" description="Disordered" evidence="2">
    <location>
        <begin position="1"/>
        <end position="25"/>
    </location>
</feature>
<feature type="compositionally biased region" description="Basic residues" evidence="2">
    <location>
        <begin position="1"/>
        <end position="16"/>
    </location>
</feature>
<name>RL16_LEIXX</name>
<evidence type="ECO:0000255" key="1">
    <source>
        <dbReference type="HAMAP-Rule" id="MF_01342"/>
    </source>
</evidence>
<evidence type="ECO:0000256" key="2">
    <source>
        <dbReference type="SAM" id="MobiDB-lite"/>
    </source>
</evidence>
<evidence type="ECO:0000305" key="3"/>
<comment type="function">
    <text evidence="1">Binds 23S rRNA and is also seen to make contacts with the A and possibly P site tRNAs.</text>
</comment>
<comment type="subunit">
    <text evidence="1">Part of the 50S ribosomal subunit.</text>
</comment>
<comment type="similarity">
    <text evidence="1">Belongs to the universal ribosomal protein uL16 family.</text>
</comment>
<gene>
    <name evidence="1" type="primary">rplP</name>
    <name type="ordered locus">Lxx20260</name>
</gene>
<proteinExistence type="inferred from homology"/>